<sequence length="424" mass="48238">MLRQQMPIDRPIPSFYGCYLLRSTIRHSALYVGSTPNPVRRLRQHNGLVKGGAVRTSRGNLRPWEMACIVTGFPTSIAALQFEWAWQNPHITLHIPPSSRISHATQKKRSGHPKRPRHTLQSLLSNLHILLTVPSFSRWPLEIKFFAPDVHRAWLKWSKAATGSLRDTLPIITDFPPAESQVNDEDGEITDRPYGIEALNVAYEDTKSHLEKGERIFHSEMKESCNICNQDLQHNSGLYTICPNINCHSITHMTCLSQHFLRAEKNEQSGEELIPVQGMCPGCRMDIRWNDVVKELSLRMRGQKVVEKLLGAKRVKKGKGIATSQEVVESEGDEEEEEEEEKEQELVDYFDADEFHARNVAQEENGFVDYLDDDDSDAVSNISMESSKSPKRKRTIGPFSKAKLIAVIEDSDVDEEIEGEELER</sequence>
<name>SLX1_BOTFB</name>
<reference key="1">
    <citation type="journal article" date="2011" name="PLoS Genet.">
        <title>Genomic analysis of the necrotrophic fungal pathogens Sclerotinia sclerotiorum and Botrytis cinerea.</title>
        <authorList>
            <person name="Amselem J."/>
            <person name="Cuomo C.A."/>
            <person name="van Kan J.A.L."/>
            <person name="Viaud M."/>
            <person name="Benito E.P."/>
            <person name="Couloux A."/>
            <person name="Coutinho P.M."/>
            <person name="de Vries R.P."/>
            <person name="Dyer P.S."/>
            <person name="Fillinger S."/>
            <person name="Fournier E."/>
            <person name="Gout L."/>
            <person name="Hahn M."/>
            <person name="Kohn L."/>
            <person name="Lapalu N."/>
            <person name="Plummer K.M."/>
            <person name="Pradier J.-M."/>
            <person name="Quevillon E."/>
            <person name="Sharon A."/>
            <person name="Simon A."/>
            <person name="ten Have A."/>
            <person name="Tudzynski B."/>
            <person name="Tudzynski P."/>
            <person name="Wincker P."/>
            <person name="Andrew M."/>
            <person name="Anthouard V."/>
            <person name="Beever R.E."/>
            <person name="Beffa R."/>
            <person name="Benoit I."/>
            <person name="Bouzid O."/>
            <person name="Brault B."/>
            <person name="Chen Z."/>
            <person name="Choquer M."/>
            <person name="Collemare J."/>
            <person name="Cotton P."/>
            <person name="Danchin E.G."/>
            <person name="Da Silva C."/>
            <person name="Gautier A."/>
            <person name="Giraud C."/>
            <person name="Giraud T."/>
            <person name="Gonzalez C."/>
            <person name="Grossetete S."/>
            <person name="Gueldener U."/>
            <person name="Henrissat B."/>
            <person name="Howlett B.J."/>
            <person name="Kodira C."/>
            <person name="Kretschmer M."/>
            <person name="Lappartient A."/>
            <person name="Leroch M."/>
            <person name="Levis C."/>
            <person name="Mauceli E."/>
            <person name="Neuveglise C."/>
            <person name="Oeser B."/>
            <person name="Pearson M."/>
            <person name="Poulain J."/>
            <person name="Poussereau N."/>
            <person name="Quesneville H."/>
            <person name="Rascle C."/>
            <person name="Schumacher J."/>
            <person name="Segurens B."/>
            <person name="Sexton A."/>
            <person name="Silva E."/>
            <person name="Sirven C."/>
            <person name="Soanes D.M."/>
            <person name="Talbot N.J."/>
            <person name="Templeton M."/>
            <person name="Yandava C."/>
            <person name="Yarden O."/>
            <person name="Zeng Q."/>
            <person name="Rollins J.A."/>
            <person name="Lebrun M.-H."/>
            <person name="Dickman M."/>
        </authorList>
    </citation>
    <scope>NUCLEOTIDE SEQUENCE [LARGE SCALE GENOMIC DNA]</scope>
    <source>
        <strain>B05.10</strain>
    </source>
</reference>
<reference key="2">
    <citation type="journal article" date="2012" name="Eukaryot. Cell">
        <title>Genome update of Botrytis cinerea strains B05.10 and T4.</title>
        <authorList>
            <person name="Staats M."/>
            <person name="van Kan J.A.L."/>
        </authorList>
    </citation>
    <scope>NUCLEOTIDE SEQUENCE [LARGE SCALE GENOMIC DNA]</scope>
    <scope>GENOME REANNOTATION</scope>
    <source>
        <strain>B05.10</strain>
    </source>
</reference>
<reference key="3">
    <citation type="journal article" date="2017" name="Mol. Plant Pathol.">
        <title>A gapless genome sequence of the fungus Botrytis cinerea.</title>
        <authorList>
            <person name="van Kan J.A.L."/>
            <person name="Stassen J.H.M."/>
            <person name="Mosbach A."/>
            <person name="van der Lee T.A.J."/>
            <person name="Faino L."/>
            <person name="Farmer A.D."/>
            <person name="Papasotiriou D.G."/>
            <person name="Zhou S."/>
            <person name="Seidl M.F."/>
            <person name="Cottam E."/>
            <person name="Edel D."/>
            <person name="Hahn M."/>
            <person name="Schwartz D.C."/>
            <person name="Dietrich R.A."/>
            <person name="Widdison S."/>
            <person name="Scalliet G."/>
        </authorList>
    </citation>
    <scope>NUCLEOTIDE SEQUENCE [LARGE SCALE GENOMIC DNA]</scope>
    <scope>GENOME REANNOTATION</scope>
    <source>
        <strain>B05.10</strain>
    </source>
</reference>
<proteinExistence type="inferred from homology"/>
<protein>
    <recommendedName>
        <fullName evidence="1">Structure-specific endonuclease subunit slx1</fullName>
        <ecNumber evidence="1">3.1.-.-</ecNumber>
    </recommendedName>
</protein>
<accession>A6RYJ8</accession>
<accession>A0A384J7F7</accession>
<dbReference type="EC" id="3.1.-.-" evidence="1"/>
<dbReference type="EMBL" id="CP009806">
    <property type="protein sequence ID" value="ATZ46628.1"/>
    <property type="molecule type" value="Genomic_DNA"/>
</dbReference>
<dbReference type="SMR" id="A6RYJ8"/>
<dbReference type="EnsemblFungi" id="Bcin02g00200.1">
    <property type="protein sequence ID" value="Bcin02p00200.1"/>
    <property type="gene ID" value="Bcin02g00200"/>
</dbReference>
<dbReference type="VEuPathDB" id="FungiDB:Bcin02g00200"/>
<dbReference type="OrthoDB" id="24645at2759"/>
<dbReference type="Proteomes" id="UP000001798">
    <property type="component" value="Chromosome bcin02"/>
</dbReference>
<dbReference type="GO" id="GO:0033557">
    <property type="term" value="C:Slx1-Slx4 complex"/>
    <property type="evidence" value="ECO:0007669"/>
    <property type="project" value="UniProtKB-UniRule"/>
</dbReference>
<dbReference type="GO" id="GO:0017108">
    <property type="term" value="F:5'-flap endonuclease activity"/>
    <property type="evidence" value="ECO:0007669"/>
    <property type="project" value="InterPro"/>
</dbReference>
<dbReference type="GO" id="GO:0008821">
    <property type="term" value="F:crossover junction DNA endonuclease activity"/>
    <property type="evidence" value="ECO:0007669"/>
    <property type="project" value="TreeGrafter"/>
</dbReference>
<dbReference type="GO" id="GO:0008270">
    <property type="term" value="F:zinc ion binding"/>
    <property type="evidence" value="ECO:0007669"/>
    <property type="project" value="UniProtKB-KW"/>
</dbReference>
<dbReference type="GO" id="GO:0000724">
    <property type="term" value="P:double-strand break repair via homologous recombination"/>
    <property type="evidence" value="ECO:0007669"/>
    <property type="project" value="TreeGrafter"/>
</dbReference>
<dbReference type="CDD" id="cd10455">
    <property type="entry name" value="GIY-YIG_SLX1"/>
    <property type="match status" value="1"/>
</dbReference>
<dbReference type="FunFam" id="3.40.1440.10:FF:000006">
    <property type="entry name" value="Structure-specific endonuclease subunit SLX1"/>
    <property type="match status" value="1"/>
</dbReference>
<dbReference type="Gene3D" id="3.40.1440.10">
    <property type="entry name" value="GIY-YIG endonuclease"/>
    <property type="match status" value="1"/>
</dbReference>
<dbReference type="Gene3D" id="3.30.40.10">
    <property type="entry name" value="Zinc/RING finger domain, C3HC4 (zinc finger)"/>
    <property type="match status" value="1"/>
</dbReference>
<dbReference type="HAMAP" id="MF_03100">
    <property type="entry name" value="Endonuc_su_Slx1"/>
    <property type="match status" value="1"/>
</dbReference>
<dbReference type="InterPro" id="IPR000305">
    <property type="entry name" value="GIY-YIG_endonuc"/>
</dbReference>
<dbReference type="InterPro" id="IPR035901">
    <property type="entry name" value="GIY-YIG_endonuc_sf"/>
</dbReference>
<dbReference type="InterPro" id="IPR027520">
    <property type="entry name" value="Slx1"/>
</dbReference>
<dbReference type="InterPro" id="IPR048749">
    <property type="entry name" value="SLX1_C"/>
</dbReference>
<dbReference type="InterPro" id="IPR050381">
    <property type="entry name" value="SLX1_endonuclease"/>
</dbReference>
<dbReference type="InterPro" id="IPR013083">
    <property type="entry name" value="Znf_RING/FYVE/PHD"/>
</dbReference>
<dbReference type="PANTHER" id="PTHR20208">
    <property type="entry name" value="STRUCTURE-SPECIFIC ENDONUCLEASE SUBUNIT SLX1"/>
    <property type="match status" value="1"/>
</dbReference>
<dbReference type="PANTHER" id="PTHR20208:SF10">
    <property type="entry name" value="STRUCTURE-SPECIFIC ENDONUCLEASE SUBUNIT SLX1"/>
    <property type="match status" value="1"/>
</dbReference>
<dbReference type="Pfam" id="PF01541">
    <property type="entry name" value="GIY-YIG"/>
    <property type="match status" value="1"/>
</dbReference>
<dbReference type="Pfam" id="PF21202">
    <property type="entry name" value="SLX1_C"/>
    <property type="match status" value="1"/>
</dbReference>
<dbReference type="SUPFAM" id="SSF82771">
    <property type="entry name" value="GIY-YIG endonuclease"/>
    <property type="match status" value="1"/>
</dbReference>
<dbReference type="PROSITE" id="PS50164">
    <property type="entry name" value="GIY_YIG"/>
    <property type="match status" value="1"/>
</dbReference>
<gene>
    <name type="primary">slx1</name>
    <name type="ORF">BC1G_05512</name>
    <name type="ORF">BCIN_02g00200</name>
</gene>
<comment type="function">
    <text evidence="1">Catalytic subunit of the slx1-slx4 structure-specific endonuclease that resolves DNA secondary structures generated during DNA repair and recombination. Has endonuclease activity towards branched DNA substrates, introducing single-strand cuts in duplex DNA close to junctions with ss-DNA.</text>
</comment>
<comment type="cofactor">
    <cofactor evidence="1">
        <name>a divalent metal cation</name>
        <dbReference type="ChEBI" id="CHEBI:60240"/>
    </cofactor>
</comment>
<comment type="subunit">
    <text evidence="1">Forms a heterodimer with slx4.</text>
</comment>
<comment type="subcellular location">
    <subcellularLocation>
        <location evidence="1">Nucleus</location>
    </subcellularLocation>
</comment>
<comment type="similarity">
    <text evidence="1">Belongs to the SLX1 family.</text>
</comment>
<feature type="chain" id="PRO_0000383778" description="Structure-specific endonuclease subunit slx1">
    <location>
        <begin position="1"/>
        <end position="424"/>
    </location>
</feature>
<feature type="domain" description="GIY-YIG" evidence="1">
    <location>
        <begin position="14"/>
        <end position="96"/>
    </location>
</feature>
<feature type="zinc finger region" description="SLX1-type" evidence="1">
    <location>
        <begin position="225"/>
        <end position="283"/>
    </location>
</feature>
<feature type="region of interest" description="Disordered" evidence="2">
    <location>
        <begin position="97"/>
        <end position="117"/>
    </location>
</feature>
<feature type="region of interest" description="Disordered" evidence="2">
    <location>
        <begin position="321"/>
        <end position="340"/>
    </location>
</feature>
<feature type="region of interest" description="Disordered" evidence="2">
    <location>
        <begin position="368"/>
        <end position="395"/>
    </location>
</feature>
<feature type="compositionally biased region" description="Basic residues" evidence="2">
    <location>
        <begin position="105"/>
        <end position="117"/>
    </location>
</feature>
<feature type="compositionally biased region" description="Acidic residues" evidence="2">
    <location>
        <begin position="328"/>
        <end position="340"/>
    </location>
</feature>
<feature type="compositionally biased region" description="Polar residues" evidence="2">
    <location>
        <begin position="378"/>
        <end position="387"/>
    </location>
</feature>
<evidence type="ECO:0000255" key="1">
    <source>
        <dbReference type="HAMAP-Rule" id="MF_03100"/>
    </source>
</evidence>
<evidence type="ECO:0000256" key="2">
    <source>
        <dbReference type="SAM" id="MobiDB-lite"/>
    </source>
</evidence>
<keyword id="KW-0227">DNA damage</keyword>
<keyword id="KW-0233">DNA recombination</keyword>
<keyword id="KW-0234">DNA repair</keyword>
<keyword id="KW-0255">Endonuclease</keyword>
<keyword id="KW-0378">Hydrolase</keyword>
<keyword id="KW-0479">Metal-binding</keyword>
<keyword id="KW-0540">Nuclease</keyword>
<keyword id="KW-0539">Nucleus</keyword>
<keyword id="KW-1185">Reference proteome</keyword>
<keyword id="KW-0862">Zinc</keyword>
<keyword id="KW-0863">Zinc-finger</keyword>
<organism>
    <name type="scientific">Botryotinia fuckeliana (strain B05.10)</name>
    <name type="common">Noble rot fungus</name>
    <name type="synonym">Botrytis cinerea</name>
    <dbReference type="NCBI Taxonomy" id="332648"/>
    <lineage>
        <taxon>Eukaryota</taxon>
        <taxon>Fungi</taxon>
        <taxon>Dikarya</taxon>
        <taxon>Ascomycota</taxon>
        <taxon>Pezizomycotina</taxon>
        <taxon>Leotiomycetes</taxon>
        <taxon>Helotiales</taxon>
        <taxon>Sclerotiniaceae</taxon>
        <taxon>Botrytis</taxon>
    </lineage>
</organism>